<feature type="transit peptide" description="Mitochondrion" evidence="1">
    <location>
        <begin position="1"/>
        <end position="28"/>
    </location>
</feature>
<feature type="chain" id="PRO_0000273075" description="Large ribosomal subunit protein uL10m">
    <location>
        <begin position="29"/>
        <end position="261"/>
    </location>
</feature>
<feature type="region of interest" description="Disordered" evidence="2">
    <location>
        <begin position="242"/>
        <end position="261"/>
    </location>
</feature>
<feature type="splice variant" id="VSP_044481" description="In isoform 2." evidence="9">
    <original>MAAAVAGMLRGGLLPQA</original>
    <variation>MISAHCNLHLPGSSDSPASASQVAGIT</variation>
    <location>
        <begin position="1"/>
        <end position="17"/>
    </location>
</feature>
<feature type="sequence variant" id="VAR_030078" description="In dbSNP:rs11538868." evidence="3">
    <original>V</original>
    <variation>I</variation>
    <location>
        <position position="125"/>
    </location>
</feature>
<feature type="sequence variant" id="VAR_083398" description="Found in a patient with intellectual disability and ataxia; uncertain significance; dbSNP:rs754258802." evidence="6">
    <original>R</original>
    <variation>W</variation>
    <location>
        <position position="166"/>
    </location>
</feature>
<feature type="helix" evidence="19">
    <location>
        <begin position="42"/>
        <end position="50"/>
    </location>
</feature>
<feature type="turn" evidence="19">
    <location>
        <begin position="62"/>
        <end position="64"/>
    </location>
</feature>
<feature type="helix" evidence="19">
    <location>
        <begin position="78"/>
        <end position="92"/>
    </location>
</feature>
<feature type="strand" evidence="20">
    <location>
        <begin position="94"/>
        <end position="99"/>
    </location>
</feature>
<feature type="strand" evidence="18">
    <location>
        <begin position="102"/>
        <end position="104"/>
    </location>
</feature>
<feature type="helix" evidence="19">
    <location>
        <begin position="106"/>
        <end position="117"/>
    </location>
</feature>
<feature type="turn" evidence="21">
    <location>
        <begin position="118"/>
        <end position="120"/>
    </location>
</feature>
<feature type="strand" evidence="19">
    <location>
        <begin position="122"/>
        <end position="125"/>
    </location>
</feature>
<feature type="helix" evidence="19">
    <location>
        <begin position="128"/>
        <end position="137"/>
    </location>
</feature>
<feature type="strand" evidence="22">
    <location>
        <begin position="141"/>
        <end position="143"/>
    </location>
</feature>
<feature type="helix" evidence="19">
    <location>
        <begin position="144"/>
        <end position="146"/>
    </location>
</feature>
<feature type="strand" evidence="19">
    <location>
        <begin position="152"/>
        <end position="158"/>
    </location>
</feature>
<feature type="helix" evidence="19">
    <location>
        <begin position="161"/>
        <end position="169"/>
    </location>
</feature>
<feature type="turn" evidence="19">
    <location>
        <begin position="170"/>
        <end position="172"/>
    </location>
</feature>
<feature type="strand" evidence="19">
    <location>
        <begin position="179"/>
        <end position="181"/>
    </location>
</feature>
<feature type="strand" evidence="19">
    <location>
        <begin position="184"/>
        <end position="186"/>
    </location>
</feature>
<feature type="helix" evidence="19">
    <location>
        <begin position="188"/>
        <end position="196"/>
    </location>
</feature>
<dbReference type="EMBL" id="AK127167">
    <property type="protein sequence ID" value="BAG54446.1"/>
    <property type="molecule type" value="mRNA"/>
</dbReference>
<dbReference type="EMBL" id="AC003665">
    <property type="status" value="NOT_ANNOTATED_CDS"/>
    <property type="molecule type" value="Genomic_DNA"/>
</dbReference>
<dbReference type="EMBL" id="CH471109">
    <property type="protein sequence ID" value="EAW94796.1"/>
    <property type="molecule type" value="Genomic_DNA"/>
</dbReference>
<dbReference type="EMBL" id="CH471109">
    <property type="protein sequence ID" value="EAW94798.1"/>
    <property type="molecule type" value="Genomic_DNA"/>
</dbReference>
<dbReference type="EMBL" id="BC015904">
    <property type="protein sequence ID" value="AAH15904.1"/>
    <property type="molecule type" value="mRNA"/>
</dbReference>
<dbReference type="EMBL" id="BC052601">
    <property type="protein sequence ID" value="AAH52601.1"/>
    <property type="molecule type" value="mRNA"/>
</dbReference>
<dbReference type="EMBL" id="AB051618">
    <property type="protein sequence ID" value="BAB54946.1"/>
    <property type="molecule type" value="Genomic_DNA"/>
</dbReference>
<dbReference type="CCDS" id="CCDS11516.1">
    <molecule id="Q7Z7H8-1"/>
</dbReference>
<dbReference type="CCDS" id="CCDS11517.1">
    <molecule id="Q7Z7H8-2"/>
</dbReference>
<dbReference type="RefSeq" id="NP_660298.2">
    <molecule id="Q7Z7H8-1"/>
    <property type="nucleotide sequence ID" value="NM_145255.3"/>
</dbReference>
<dbReference type="RefSeq" id="NP_683685.1">
    <molecule id="Q7Z7H8-2"/>
    <property type="nucleotide sequence ID" value="NM_148887.3"/>
</dbReference>
<dbReference type="RefSeq" id="XP_024306343.1">
    <molecule id="Q7Z7H8-2"/>
    <property type="nucleotide sequence ID" value="XM_024450575.2"/>
</dbReference>
<dbReference type="RefSeq" id="XP_054171019.1">
    <molecule id="Q7Z7H8-2"/>
    <property type="nucleotide sequence ID" value="XM_054315044.1"/>
</dbReference>
<dbReference type="PDB" id="3J7Y">
    <property type="method" value="EM"/>
    <property type="resolution" value="3.40 A"/>
    <property type="chains" value="I=1-261"/>
</dbReference>
<dbReference type="PDB" id="3J9M">
    <property type="method" value="EM"/>
    <property type="resolution" value="3.50 A"/>
    <property type="chains" value="I=1-261"/>
</dbReference>
<dbReference type="PDB" id="5OOL">
    <property type="method" value="EM"/>
    <property type="resolution" value="3.06 A"/>
    <property type="chains" value="I=1-261"/>
</dbReference>
<dbReference type="PDB" id="5OOM">
    <property type="method" value="EM"/>
    <property type="resolution" value="3.03 A"/>
    <property type="chains" value="I=1-261"/>
</dbReference>
<dbReference type="PDB" id="6I9R">
    <property type="method" value="EM"/>
    <property type="resolution" value="3.90 A"/>
    <property type="chains" value="I=1-261"/>
</dbReference>
<dbReference type="PDB" id="6NU2">
    <property type="method" value="EM"/>
    <property type="resolution" value="3.90 A"/>
    <property type="chains" value="I=30-197"/>
</dbReference>
<dbReference type="PDB" id="6NU3">
    <property type="method" value="EM"/>
    <property type="resolution" value="4.40 A"/>
    <property type="chains" value="I=1-261"/>
</dbReference>
<dbReference type="PDB" id="6VLZ">
    <property type="method" value="EM"/>
    <property type="resolution" value="2.97 A"/>
    <property type="chains" value="I=1-261"/>
</dbReference>
<dbReference type="PDB" id="6VMI">
    <property type="method" value="EM"/>
    <property type="resolution" value="2.96 A"/>
    <property type="chains" value="I=1-261"/>
</dbReference>
<dbReference type="PDB" id="6ZM5">
    <property type="method" value="EM"/>
    <property type="resolution" value="2.89 A"/>
    <property type="chains" value="I=1-261"/>
</dbReference>
<dbReference type="PDB" id="6ZM6">
    <property type="method" value="EM"/>
    <property type="resolution" value="2.59 A"/>
    <property type="chains" value="I=1-261"/>
</dbReference>
<dbReference type="PDB" id="6ZS9">
    <property type="method" value="EM"/>
    <property type="resolution" value="4.00 A"/>
    <property type="chains" value="XI=1-261"/>
</dbReference>
<dbReference type="PDB" id="6ZSA">
    <property type="method" value="EM"/>
    <property type="resolution" value="4.00 A"/>
    <property type="chains" value="XI=1-261"/>
</dbReference>
<dbReference type="PDB" id="6ZSB">
    <property type="method" value="EM"/>
    <property type="resolution" value="4.50 A"/>
    <property type="chains" value="XI=1-261"/>
</dbReference>
<dbReference type="PDB" id="6ZSC">
    <property type="method" value="EM"/>
    <property type="resolution" value="3.50 A"/>
    <property type="chains" value="XI=1-261"/>
</dbReference>
<dbReference type="PDB" id="6ZSD">
    <property type="method" value="EM"/>
    <property type="resolution" value="3.70 A"/>
    <property type="chains" value="XI=1-261"/>
</dbReference>
<dbReference type="PDB" id="6ZSE">
    <property type="method" value="EM"/>
    <property type="resolution" value="5.00 A"/>
    <property type="chains" value="XI=1-261"/>
</dbReference>
<dbReference type="PDB" id="6ZSG">
    <property type="method" value="EM"/>
    <property type="resolution" value="4.00 A"/>
    <property type="chains" value="XI=1-261"/>
</dbReference>
<dbReference type="PDB" id="7A5F">
    <property type="method" value="EM"/>
    <property type="resolution" value="4.40 A"/>
    <property type="chains" value="I3=1-261"/>
</dbReference>
<dbReference type="PDB" id="7A5G">
    <property type="method" value="EM"/>
    <property type="resolution" value="4.33 A"/>
    <property type="chains" value="I3=1-261"/>
</dbReference>
<dbReference type="PDB" id="7A5H">
    <property type="method" value="EM"/>
    <property type="resolution" value="3.30 A"/>
    <property type="chains" value="I=1-261"/>
</dbReference>
<dbReference type="PDB" id="7A5I">
    <property type="method" value="EM"/>
    <property type="resolution" value="3.70 A"/>
    <property type="chains" value="I3=1-261"/>
</dbReference>
<dbReference type="PDB" id="7A5J">
    <property type="method" value="EM"/>
    <property type="resolution" value="3.10 A"/>
    <property type="chains" value="I=1-261"/>
</dbReference>
<dbReference type="PDB" id="7A5K">
    <property type="method" value="EM"/>
    <property type="resolution" value="3.70 A"/>
    <property type="chains" value="I3=1-261"/>
</dbReference>
<dbReference type="PDB" id="7L08">
    <property type="method" value="EM"/>
    <property type="resolution" value="3.49 A"/>
    <property type="chains" value="I=1-261"/>
</dbReference>
<dbReference type="PDB" id="7L20">
    <property type="method" value="EM"/>
    <property type="resolution" value="3.15 A"/>
    <property type="chains" value="I=1-261"/>
</dbReference>
<dbReference type="PDB" id="7O9K">
    <property type="method" value="EM"/>
    <property type="resolution" value="3.10 A"/>
    <property type="chains" value="I=1-261"/>
</dbReference>
<dbReference type="PDB" id="7O9M">
    <property type="method" value="EM"/>
    <property type="resolution" value="2.50 A"/>
    <property type="chains" value="I=1-261"/>
</dbReference>
<dbReference type="PDB" id="7ODR">
    <property type="method" value="EM"/>
    <property type="resolution" value="2.90 A"/>
    <property type="chains" value="I=1-261"/>
</dbReference>
<dbReference type="PDB" id="7ODS">
    <property type="method" value="EM"/>
    <property type="resolution" value="3.10 A"/>
    <property type="chains" value="I=1-261"/>
</dbReference>
<dbReference type="PDB" id="7ODT">
    <property type="method" value="EM"/>
    <property type="resolution" value="3.10 A"/>
    <property type="chains" value="I=1-261"/>
</dbReference>
<dbReference type="PDB" id="7OF0">
    <property type="method" value="EM"/>
    <property type="resolution" value="2.20 A"/>
    <property type="chains" value="I=1-261"/>
</dbReference>
<dbReference type="PDB" id="7OF2">
    <property type="method" value="EM"/>
    <property type="resolution" value="2.70 A"/>
    <property type="chains" value="I=1-261"/>
</dbReference>
<dbReference type="PDB" id="7OF3">
    <property type="method" value="EM"/>
    <property type="resolution" value="2.70 A"/>
    <property type="chains" value="I=1-261"/>
</dbReference>
<dbReference type="PDB" id="7OF4">
    <property type="method" value="EM"/>
    <property type="resolution" value="2.70 A"/>
    <property type="chains" value="I=1-261"/>
</dbReference>
<dbReference type="PDB" id="7OF5">
    <property type="method" value="EM"/>
    <property type="resolution" value="2.90 A"/>
    <property type="chains" value="I=1-261"/>
</dbReference>
<dbReference type="PDB" id="7OF6">
    <property type="method" value="EM"/>
    <property type="resolution" value="2.60 A"/>
    <property type="chains" value="I=1-261"/>
</dbReference>
<dbReference type="PDB" id="7OF7">
    <property type="method" value="EM"/>
    <property type="resolution" value="2.50 A"/>
    <property type="chains" value="I=1-261"/>
</dbReference>
<dbReference type="PDB" id="7OG4">
    <property type="method" value="EM"/>
    <property type="resolution" value="3.80 A"/>
    <property type="chains" value="XI=1-261"/>
</dbReference>
<dbReference type="PDB" id="7OI6">
    <property type="method" value="EM"/>
    <property type="resolution" value="5.70 A"/>
    <property type="chains" value="I=1-261"/>
</dbReference>
<dbReference type="PDB" id="7OI7">
    <property type="method" value="EM"/>
    <property type="resolution" value="3.50 A"/>
    <property type="chains" value="I=1-261"/>
</dbReference>
<dbReference type="PDB" id="7OI8">
    <property type="method" value="EM"/>
    <property type="resolution" value="3.50 A"/>
    <property type="chains" value="I=1-261"/>
</dbReference>
<dbReference type="PDB" id="7OI9">
    <property type="method" value="EM"/>
    <property type="resolution" value="3.30 A"/>
    <property type="chains" value="I=1-261"/>
</dbReference>
<dbReference type="PDB" id="7OIA">
    <property type="method" value="EM"/>
    <property type="resolution" value="3.20 A"/>
    <property type="chains" value="I=1-261"/>
</dbReference>
<dbReference type="PDB" id="7OIB">
    <property type="method" value="EM"/>
    <property type="resolution" value="3.30 A"/>
    <property type="chains" value="I=1-261"/>
</dbReference>
<dbReference type="PDB" id="7OIC">
    <property type="method" value="EM"/>
    <property type="resolution" value="3.10 A"/>
    <property type="chains" value="I=1-261"/>
</dbReference>
<dbReference type="PDB" id="7OID">
    <property type="method" value="EM"/>
    <property type="resolution" value="3.70 A"/>
    <property type="chains" value="I=1-261"/>
</dbReference>
<dbReference type="PDB" id="7OIE">
    <property type="method" value="EM"/>
    <property type="resolution" value="3.50 A"/>
    <property type="chains" value="I=1-261"/>
</dbReference>
<dbReference type="PDB" id="7PD3">
    <property type="method" value="EM"/>
    <property type="resolution" value="3.40 A"/>
    <property type="chains" value="G=1-261"/>
</dbReference>
<dbReference type="PDB" id="7PO4">
    <property type="method" value="EM"/>
    <property type="resolution" value="2.56 A"/>
    <property type="chains" value="I=1-261"/>
</dbReference>
<dbReference type="PDB" id="7QH7">
    <property type="method" value="EM"/>
    <property type="resolution" value="2.89 A"/>
    <property type="chains" value="I=37-66"/>
</dbReference>
<dbReference type="PDB" id="7QI4">
    <property type="method" value="EM"/>
    <property type="resolution" value="2.21 A"/>
    <property type="chains" value="I=1-261"/>
</dbReference>
<dbReference type="PDB" id="7QI5">
    <property type="method" value="EM"/>
    <property type="resolution" value="2.63 A"/>
    <property type="chains" value="I=1-261"/>
</dbReference>
<dbReference type="PDB" id="7QI6">
    <property type="method" value="EM"/>
    <property type="resolution" value="2.98 A"/>
    <property type="chains" value="I=1-261"/>
</dbReference>
<dbReference type="PDB" id="8ANY">
    <property type="method" value="EM"/>
    <property type="resolution" value="2.85 A"/>
    <property type="chains" value="I=1-261"/>
</dbReference>
<dbReference type="PDB" id="8K2A">
    <property type="method" value="EM"/>
    <property type="resolution" value="2.90 A"/>
    <property type="chains" value="LJ=1-261"/>
</dbReference>
<dbReference type="PDB" id="8K2B">
    <property type="method" value="EM"/>
    <property type="resolution" value="3.40 A"/>
    <property type="chains" value="LJ=1-261"/>
</dbReference>
<dbReference type="PDB" id="8OIR">
    <property type="method" value="EM"/>
    <property type="resolution" value="3.10 A"/>
    <property type="chains" value="BP=1-261"/>
</dbReference>
<dbReference type="PDB" id="8OIT">
    <property type="method" value="EM"/>
    <property type="resolution" value="2.90 A"/>
    <property type="chains" value="BP=1-261"/>
</dbReference>
<dbReference type="PDB" id="8PK0">
    <property type="method" value="EM"/>
    <property type="resolution" value="3.03 A"/>
    <property type="chains" value="I=1-261"/>
</dbReference>
<dbReference type="PDB" id="8QSJ">
    <property type="method" value="EM"/>
    <property type="resolution" value="3.00 A"/>
    <property type="chains" value="I=1-261"/>
</dbReference>
<dbReference type="PDB" id="8QU1">
    <property type="method" value="EM"/>
    <property type="resolution" value="2.74 A"/>
    <property type="chains" value="I=1-261"/>
</dbReference>
<dbReference type="PDB" id="8QU5">
    <property type="method" value="EM"/>
    <property type="resolution" value="2.42 A"/>
    <property type="chains" value="I=1-261"/>
</dbReference>
<dbReference type="PDB" id="8XT0">
    <property type="method" value="EM"/>
    <property type="resolution" value="3.20 A"/>
    <property type="chains" value="LJ=1-261"/>
</dbReference>
<dbReference type="PDB" id="8XT1">
    <property type="method" value="EM"/>
    <property type="resolution" value="3.10 A"/>
    <property type="chains" value="LJ=1-261"/>
</dbReference>
<dbReference type="PDB" id="8XT2">
    <property type="method" value="EM"/>
    <property type="resolution" value="3.30 A"/>
    <property type="chains" value="LJ=1-261"/>
</dbReference>
<dbReference type="PDB" id="8XT3">
    <property type="method" value="EM"/>
    <property type="resolution" value="3.10 A"/>
    <property type="chains" value="LJ=1-261"/>
</dbReference>
<dbReference type="PDBsum" id="3J7Y"/>
<dbReference type="PDBsum" id="3J9M"/>
<dbReference type="PDBsum" id="5OOL"/>
<dbReference type="PDBsum" id="5OOM"/>
<dbReference type="PDBsum" id="6I9R"/>
<dbReference type="PDBsum" id="6NU2"/>
<dbReference type="PDBsum" id="6NU3"/>
<dbReference type="PDBsum" id="6VLZ"/>
<dbReference type="PDBsum" id="6VMI"/>
<dbReference type="PDBsum" id="6ZM5"/>
<dbReference type="PDBsum" id="6ZM6"/>
<dbReference type="PDBsum" id="6ZS9"/>
<dbReference type="PDBsum" id="6ZSA"/>
<dbReference type="PDBsum" id="6ZSB"/>
<dbReference type="PDBsum" id="6ZSC"/>
<dbReference type="PDBsum" id="6ZSD"/>
<dbReference type="PDBsum" id="6ZSE"/>
<dbReference type="PDBsum" id="6ZSG"/>
<dbReference type="PDBsum" id="7A5F"/>
<dbReference type="PDBsum" id="7A5G"/>
<dbReference type="PDBsum" id="7A5H"/>
<dbReference type="PDBsum" id="7A5I"/>
<dbReference type="PDBsum" id="7A5J"/>
<dbReference type="PDBsum" id="7A5K"/>
<dbReference type="PDBsum" id="7L08"/>
<dbReference type="PDBsum" id="7L20"/>
<dbReference type="PDBsum" id="7O9K"/>
<dbReference type="PDBsum" id="7O9M"/>
<dbReference type="PDBsum" id="7ODR"/>
<dbReference type="PDBsum" id="7ODS"/>
<dbReference type="PDBsum" id="7ODT"/>
<dbReference type="PDBsum" id="7OF0"/>
<dbReference type="PDBsum" id="7OF2"/>
<dbReference type="PDBsum" id="7OF3"/>
<dbReference type="PDBsum" id="7OF4"/>
<dbReference type="PDBsum" id="7OF5"/>
<dbReference type="PDBsum" id="7OF6"/>
<dbReference type="PDBsum" id="7OF7"/>
<dbReference type="PDBsum" id="7OG4"/>
<dbReference type="PDBsum" id="7OI6"/>
<dbReference type="PDBsum" id="7OI7"/>
<dbReference type="PDBsum" id="7OI8"/>
<dbReference type="PDBsum" id="7OI9"/>
<dbReference type="PDBsum" id="7OIA"/>
<dbReference type="PDBsum" id="7OIB"/>
<dbReference type="PDBsum" id="7OIC"/>
<dbReference type="PDBsum" id="7OID"/>
<dbReference type="PDBsum" id="7OIE"/>
<dbReference type="PDBsum" id="7PD3"/>
<dbReference type="PDBsum" id="7PO4"/>
<dbReference type="PDBsum" id="7QH7"/>
<dbReference type="PDBsum" id="7QI4"/>
<dbReference type="PDBsum" id="7QI5"/>
<dbReference type="PDBsum" id="7QI6"/>
<dbReference type="PDBsum" id="8ANY"/>
<dbReference type="PDBsum" id="8K2A"/>
<dbReference type="PDBsum" id="8K2B"/>
<dbReference type="PDBsum" id="8OIR"/>
<dbReference type="PDBsum" id="8OIT"/>
<dbReference type="PDBsum" id="8PK0"/>
<dbReference type="PDBsum" id="8QSJ"/>
<dbReference type="PDBsum" id="8QU1"/>
<dbReference type="PDBsum" id="8QU5"/>
<dbReference type="PDBsum" id="8XT0"/>
<dbReference type="PDBsum" id="8XT1"/>
<dbReference type="PDBsum" id="8XT2"/>
<dbReference type="PDBsum" id="8XT3"/>
<dbReference type="EMDB" id="EMD-0514"/>
<dbReference type="EMDB" id="EMD-0515"/>
<dbReference type="EMDB" id="EMD-11278"/>
<dbReference type="EMDB" id="EMD-11279"/>
<dbReference type="EMDB" id="EMD-11390"/>
<dbReference type="EMDB" id="EMD-11391"/>
<dbReference type="EMDB" id="EMD-11392"/>
<dbReference type="EMDB" id="EMD-11393"/>
<dbReference type="EMDB" id="EMD-11394"/>
<dbReference type="EMDB" id="EMD-11395"/>
<dbReference type="EMDB" id="EMD-11397"/>
<dbReference type="EMDB" id="EMD-11641"/>
<dbReference type="EMDB" id="EMD-11642"/>
<dbReference type="EMDB" id="EMD-11643"/>
<dbReference type="EMDB" id="EMD-11644"/>
<dbReference type="EMDB" id="EMD-11645"/>
<dbReference type="EMDB" id="EMD-11646"/>
<dbReference type="EMDB" id="EMD-12763"/>
<dbReference type="EMDB" id="EMD-12764"/>
<dbReference type="EMDB" id="EMD-12845"/>
<dbReference type="EMDB" id="EMD-12846"/>
<dbReference type="EMDB" id="EMD-12847"/>
<dbReference type="EMDB" id="EMD-12865"/>
<dbReference type="EMDB" id="EMD-12867"/>
<dbReference type="EMDB" id="EMD-12868"/>
<dbReference type="EMDB" id="EMD-12869"/>
<dbReference type="EMDB" id="EMD-12870"/>
<dbReference type="EMDB" id="EMD-12871"/>
<dbReference type="EMDB" id="EMD-12872"/>
<dbReference type="EMDB" id="EMD-12877"/>
<dbReference type="EMDB" id="EMD-12919"/>
<dbReference type="EMDB" id="EMD-12920"/>
<dbReference type="EMDB" id="EMD-12921"/>
<dbReference type="EMDB" id="EMD-12922"/>
<dbReference type="EMDB" id="EMD-12923"/>
<dbReference type="EMDB" id="EMD-12924"/>
<dbReference type="EMDB" id="EMD-12925"/>
<dbReference type="EMDB" id="EMD-12926"/>
<dbReference type="EMDB" id="EMD-12927"/>
<dbReference type="EMDB" id="EMD-13329"/>
<dbReference type="EMDB" id="EMD-13562"/>
<dbReference type="EMDB" id="EMD-13967"/>
<dbReference type="EMDB" id="EMD-13980"/>
<dbReference type="EMDB" id="EMD-13981"/>
<dbReference type="EMDB" id="EMD-13982"/>
<dbReference type="EMDB" id="EMD-15544"/>
<dbReference type="EMDB" id="EMD-16897"/>
<dbReference type="EMDB" id="EMD-16899"/>
<dbReference type="EMDB" id="EMD-17719"/>
<dbReference type="EMDB" id="EMD-21233"/>
<dbReference type="EMDB" id="EMD-21242"/>
<dbReference type="EMDB" id="EMD-23096"/>
<dbReference type="EMDB" id="EMD-23121"/>
<dbReference type="EMDB" id="EMD-36836"/>
<dbReference type="EMDB" id="EMD-36837"/>
<dbReference type="EMDB" id="EMD-3842"/>
<dbReference type="EMDB" id="EMD-3843"/>
<dbReference type="EMDB" id="EMD-38632"/>
<dbReference type="EMDB" id="EMD-38633"/>
<dbReference type="EMDB" id="EMD-38634"/>
<dbReference type="EMDB" id="EMD-38635"/>
<dbReference type="EMDB" id="EMD-4434"/>
<dbReference type="SMR" id="Q7Z7H8"/>
<dbReference type="BioGRID" id="125910">
    <property type="interactions" value="199"/>
</dbReference>
<dbReference type="ComplexPortal" id="CPX-5226">
    <property type="entry name" value="39S mitochondrial large ribosomal subunit"/>
</dbReference>
<dbReference type="CORUM" id="Q7Z7H8"/>
<dbReference type="DIP" id="DIP-59717N"/>
<dbReference type="FunCoup" id="Q7Z7H8">
    <property type="interactions" value="2140"/>
</dbReference>
<dbReference type="IntAct" id="Q7Z7H8">
    <property type="interactions" value="112"/>
</dbReference>
<dbReference type="MINT" id="Q7Z7H8"/>
<dbReference type="STRING" id="9606.ENSP00000290208"/>
<dbReference type="iPTMnet" id="Q7Z7H8"/>
<dbReference type="PhosphoSitePlus" id="Q7Z7H8"/>
<dbReference type="SwissPalm" id="Q7Z7H8"/>
<dbReference type="BioMuta" id="MRPL10"/>
<dbReference type="DMDM" id="215274216"/>
<dbReference type="jPOST" id="Q7Z7H8"/>
<dbReference type="MassIVE" id="Q7Z7H8"/>
<dbReference type="PaxDb" id="9606-ENSP00000290208"/>
<dbReference type="PeptideAtlas" id="Q7Z7H8"/>
<dbReference type="ProteomicsDB" id="1131"/>
<dbReference type="ProteomicsDB" id="69551">
    <molecule id="Q7Z7H8-1"/>
</dbReference>
<dbReference type="Pumba" id="Q7Z7H8"/>
<dbReference type="Antibodypedia" id="17772">
    <property type="antibodies" value="173 antibodies from 25 providers"/>
</dbReference>
<dbReference type="DNASU" id="124995"/>
<dbReference type="Ensembl" id="ENST00000290208.11">
    <molecule id="Q7Z7H8-2"/>
    <property type="protein sequence ID" value="ENSP00000290208.7"/>
    <property type="gene ID" value="ENSG00000159111.13"/>
</dbReference>
<dbReference type="Ensembl" id="ENST00000351111.7">
    <molecule id="Q7Z7H8-1"/>
    <property type="protein sequence ID" value="ENSP00000324100.4"/>
    <property type="gene ID" value="ENSG00000159111.13"/>
</dbReference>
<dbReference type="Ensembl" id="ENST00000414011.1">
    <molecule id="Q7Z7H8-2"/>
    <property type="protein sequence ID" value="ENSP00000395870.1"/>
    <property type="gene ID" value="ENSG00000159111.13"/>
</dbReference>
<dbReference type="GeneID" id="124995"/>
<dbReference type="KEGG" id="hsa:124995"/>
<dbReference type="MANE-Select" id="ENST00000351111.7">
    <property type="protein sequence ID" value="ENSP00000324100.4"/>
    <property type="RefSeq nucleotide sequence ID" value="NM_145255.4"/>
    <property type="RefSeq protein sequence ID" value="NP_660298.2"/>
</dbReference>
<dbReference type="UCSC" id="uc002ily.4">
    <molecule id="Q7Z7H8-1"/>
    <property type="organism name" value="human"/>
</dbReference>
<dbReference type="AGR" id="HGNC:14055"/>
<dbReference type="CTD" id="124995"/>
<dbReference type="DisGeNET" id="124995"/>
<dbReference type="GeneCards" id="MRPL10"/>
<dbReference type="HGNC" id="HGNC:14055">
    <property type="gene designation" value="MRPL10"/>
</dbReference>
<dbReference type="HPA" id="ENSG00000159111">
    <property type="expression patterns" value="Low tissue specificity"/>
</dbReference>
<dbReference type="MalaCards" id="MRPL10"/>
<dbReference type="MIM" id="611825">
    <property type="type" value="gene"/>
</dbReference>
<dbReference type="neXtProt" id="NX_Q7Z7H8"/>
<dbReference type="OpenTargets" id="ENSG00000159111"/>
<dbReference type="PharmGKB" id="PA30939"/>
<dbReference type="VEuPathDB" id="HostDB:ENSG00000159111"/>
<dbReference type="eggNOG" id="KOG4241">
    <property type="taxonomic scope" value="Eukaryota"/>
</dbReference>
<dbReference type="GeneTree" id="ENSGT00390000000603"/>
<dbReference type="HOGENOM" id="CLU_073093_0_0_1"/>
<dbReference type="InParanoid" id="Q7Z7H8"/>
<dbReference type="OMA" id="RENRMIA"/>
<dbReference type="OrthoDB" id="360689at2759"/>
<dbReference type="PAN-GO" id="Q7Z7H8">
    <property type="GO annotations" value="3 GO annotations based on evolutionary models"/>
</dbReference>
<dbReference type="PhylomeDB" id="Q7Z7H8"/>
<dbReference type="TreeFam" id="TF321349"/>
<dbReference type="PathwayCommons" id="Q7Z7H8"/>
<dbReference type="Reactome" id="R-HSA-5368286">
    <property type="pathway name" value="Mitochondrial translation initiation"/>
</dbReference>
<dbReference type="Reactome" id="R-HSA-5389840">
    <property type="pathway name" value="Mitochondrial translation elongation"/>
</dbReference>
<dbReference type="Reactome" id="R-HSA-5419276">
    <property type="pathway name" value="Mitochondrial translation termination"/>
</dbReference>
<dbReference type="SignaLink" id="Q7Z7H8"/>
<dbReference type="SIGNOR" id="Q7Z7H8"/>
<dbReference type="BioGRID-ORCS" id="124995">
    <property type="hits" value="610 hits in 1166 CRISPR screens"/>
</dbReference>
<dbReference type="ChiTaRS" id="MRPL10">
    <property type="organism name" value="human"/>
</dbReference>
<dbReference type="GeneWiki" id="MRPL10"/>
<dbReference type="GenomeRNAi" id="124995"/>
<dbReference type="Pharos" id="Q7Z7H8">
    <property type="development level" value="Tbio"/>
</dbReference>
<dbReference type="PRO" id="PR:Q7Z7H8"/>
<dbReference type="Proteomes" id="UP000005640">
    <property type="component" value="Chromosome 17"/>
</dbReference>
<dbReference type="RNAct" id="Q7Z7H8">
    <property type="molecule type" value="protein"/>
</dbReference>
<dbReference type="Bgee" id="ENSG00000159111">
    <property type="expression patterns" value="Expressed in apex of heart and 184 other cell types or tissues"/>
</dbReference>
<dbReference type="ExpressionAtlas" id="Q7Z7H8">
    <property type="expression patterns" value="baseline and differential"/>
</dbReference>
<dbReference type="GO" id="GO:0005743">
    <property type="term" value="C:mitochondrial inner membrane"/>
    <property type="evidence" value="ECO:0000304"/>
    <property type="project" value="Reactome"/>
</dbReference>
<dbReference type="GO" id="GO:0005762">
    <property type="term" value="C:mitochondrial large ribosomal subunit"/>
    <property type="evidence" value="ECO:0000314"/>
    <property type="project" value="UniProtKB"/>
</dbReference>
<dbReference type="GO" id="GO:0005739">
    <property type="term" value="C:mitochondrion"/>
    <property type="evidence" value="ECO:0000314"/>
    <property type="project" value="HPA"/>
</dbReference>
<dbReference type="GO" id="GO:0005654">
    <property type="term" value="C:nucleoplasm"/>
    <property type="evidence" value="ECO:0000314"/>
    <property type="project" value="HPA"/>
</dbReference>
<dbReference type="GO" id="GO:1990904">
    <property type="term" value="C:ribonucleoprotein complex"/>
    <property type="evidence" value="ECO:0000250"/>
    <property type="project" value="UniProtKB"/>
</dbReference>
<dbReference type="GO" id="GO:0003723">
    <property type="term" value="F:RNA binding"/>
    <property type="evidence" value="ECO:0007005"/>
    <property type="project" value="UniProtKB"/>
</dbReference>
<dbReference type="GO" id="GO:0003735">
    <property type="term" value="F:structural constituent of ribosome"/>
    <property type="evidence" value="ECO:0000250"/>
    <property type="project" value="UniProtKB"/>
</dbReference>
<dbReference type="GO" id="GO:0032543">
    <property type="term" value="P:mitochondrial translation"/>
    <property type="evidence" value="ECO:0000303"/>
    <property type="project" value="ComplexPortal"/>
</dbReference>
<dbReference type="GO" id="GO:0006412">
    <property type="term" value="P:translation"/>
    <property type="evidence" value="ECO:0000250"/>
    <property type="project" value="UniProtKB"/>
</dbReference>
<dbReference type="CDD" id="cd05797">
    <property type="entry name" value="Ribosomal_L10"/>
    <property type="match status" value="1"/>
</dbReference>
<dbReference type="FunFam" id="3.30.70.1730:FF:000006">
    <property type="entry name" value="39S ribosomal protein L10, mitochondrial"/>
    <property type="match status" value="1"/>
</dbReference>
<dbReference type="Gene3D" id="3.30.70.1730">
    <property type="match status" value="1"/>
</dbReference>
<dbReference type="InterPro" id="IPR001790">
    <property type="entry name" value="Ribosomal_uL10"/>
</dbReference>
<dbReference type="InterPro" id="IPR043141">
    <property type="entry name" value="Ribosomal_uL10-like_sf"/>
</dbReference>
<dbReference type="InterPro" id="IPR047865">
    <property type="entry name" value="Ribosomal_uL10_bac_type"/>
</dbReference>
<dbReference type="PANTHER" id="PTHR11560">
    <property type="entry name" value="39S RIBOSOMAL PROTEIN L10, MITOCHONDRIAL"/>
    <property type="match status" value="1"/>
</dbReference>
<dbReference type="Pfam" id="PF00466">
    <property type="entry name" value="Ribosomal_L10"/>
    <property type="match status" value="1"/>
</dbReference>
<dbReference type="SUPFAM" id="SSF160369">
    <property type="entry name" value="Ribosomal protein L10-like"/>
    <property type="match status" value="1"/>
</dbReference>
<reference key="1">
    <citation type="journal article" date="2004" name="Nat. Genet.">
        <title>Complete sequencing and characterization of 21,243 full-length human cDNAs.</title>
        <authorList>
            <person name="Ota T."/>
            <person name="Suzuki Y."/>
            <person name="Nishikawa T."/>
            <person name="Otsuki T."/>
            <person name="Sugiyama T."/>
            <person name="Irie R."/>
            <person name="Wakamatsu A."/>
            <person name="Hayashi K."/>
            <person name="Sato H."/>
            <person name="Nagai K."/>
            <person name="Kimura K."/>
            <person name="Makita H."/>
            <person name="Sekine M."/>
            <person name="Obayashi M."/>
            <person name="Nishi T."/>
            <person name="Shibahara T."/>
            <person name="Tanaka T."/>
            <person name="Ishii S."/>
            <person name="Yamamoto J."/>
            <person name="Saito K."/>
            <person name="Kawai Y."/>
            <person name="Isono Y."/>
            <person name="Nakamura Y."/>
            <person name="Nagahari K."/>
            <person name="Murakami K."/>
            <person name="Yasuda T."/>
            <person name="Iwayanagi T."/>
            <person name="Wagatsuma M."/>
            <person name="Shiratori A."/>
            <person name="Sudo H."/>
            <person name="Hosoiri T."/>
            <person name="Kaku Y."/>
            <person name="Kodaira H."/>
            <person name="Kondo H."/>
            <person name="Sugawara M."/>
            <person name="Takahashi M."/>
            <person name="Kanda K."/>
            <person name="Yokoi T."/>
            <person name="Furuya T."/>
            <person name="Kikkawa E."/>
            <person name="Omura Y."/>
            <person name="Abe K."/>
            <person name="Kamihara K."/>
            <person name="Katsuta N."/>
            <person name="Sato K."/>
            <person name="Tanikawa M."/>
            <person name="Yamazaki M."/>
            <person name="Ninomiya K."/>
            <person name="Ishibashi T."/>
            <person name="Yamashita H."/>
            <person name="Murakawa K."/>
            <person name="Fujimori K."/>
            <person name="Tanai H."/>
            <person name="Kimata M."/>
            <person name="Watanabe M."/>
            <person name="Hiraoka S."/>
            <person name="Chiba Y."/>
            <person name="Ishida S."/>
            <person name="Ono Y."/>
            <person name="Takiguchi S."/>
            <person name="Watanabe S."/>
            <person name="Yosida M."/>
            <person name="Hotuta T."/>
            <person name="Kusano J."/>
            <person name="Kanehori K."/>
            <person name="Takahashi-Fujii A."/>
            <person name="Hara H."/>
            <person name="Tanase T.-O."/>
            <person name="Nomura Y."/>
            <person name="Togiya S."/>
            <person name="Komai F."/>
            <person name="Hara R."/>
            <person name="Takeuchi K."/>
            <person name="Arita M."/>
            <person name="Imose N."/>
            <person name="Musashino K."/>
            <person name="Yuuki H."/>
            <person name="Oshima A."/>
            <person name="Sasaki N."/>
            <person name="Aotsuka S."/>
            <person name="Yoshikawa Y."/>
            <person name="Matsunawa H."/>
            <person name="Ichihara T."/>
            <person name="Shiohata N."/>
            <person name="Sano S."/>
            <person name="Moriya S."/>
            <person name="Momiyama H."/>
            <person name="Satoh N."/>
            <person name="Takami S."/>
            <person name="Terashima Y."/>
            <person name="Suzuki O."/>
            <person name="Nakagawa S."/>
            <person name="Senoh A."/>
            <person name="Mizoguchi H."/>
            <person name="Goto Y."/>
            <person name="Shimizu F."/>
            <person name="Wakebe H."/>
            <person name="Hishigaki H."/>
            <person name="Watanabe T."/>
            <person name="Sugiyama A."/>
            <person name="Takemoto M."/>
            <person name="Kawakami B."/>
            <person name="Yamazaki M."/>
            <person name="Watanabe K."/>
            <person name="Kumagai A."/>
            <person name="Itakura S."/>
            <person name="Fukuzumi Y."/>
            <person name="Fujimori Y."/>
            <person name="Komiyama M."/>
            <person name="Tashiro H."/>
            <person name="Tanigami A."/>
            <person name="Fujiwara T."/>
            <person name="Ono T."/>
            <person name="Yamada K."/>
            <person name="Fujii Y."/>
            <person name="Ozaki K."/>
            <person name="Hirao M."/>
            <person name="Ohmori Y."/>
            <person name="Kawabata A."/>
            <person name="Hikiji T."/>
            <person name="Kobatake N."/>
            <person name="Inagaki H."/>
            <person name="Ikema Y."/>
            <person name="Okamoto S."/>
            <person name="Okitani R."/>
            <person name="Kawakami T."/>
            <person name="Noguchi S."/>
            <person name="Itoh T."/>
            <person name="Shigeta K."/>
            <person name="Senba T."/>
            <person name="Matsumura K."/>
            <person name="Nakajima Y."/>
            <person name="Mizuno T."/>
            <person name="Morinaga M."/>
            <person name="Sasaki M."/>
            <person name="Togashi T."/>
            <person name="Oyama M."/>
            <person name="Hata H."/>
            <person name="Watanabe M."/>
            <person name="Komatsu T."/>
            <person name="Mizushima-Sugano J."/>
            <person name="Satoh T."/>
            <person name="Shirai Y."/>
            <person name="Takahashi Y."/>
            <person name="Nakagawa K."/>
            <person name="Okumura K."/>
            <person name="Nagase T."/>
            <person name="Nomura N."/>
            <person name="Kikuchi H."/>
            <person name="Masuho Y."/>
            <person name="Yamashita R."/>
            <person name="Nakai K."/>
            <person name="Yada T."/>
            <person name="Nakamura Y."/>
            <person name="Ohara O."/>
            <person name="Isogai T."/>
            <person name="Sugano S."/>
        </authorList>
    </citation>
    <scope>NUCLEOTIDE SEQUENCE [LARGE SCALE MRNA] (ISOFORM 2)</scope>
    <source>
        <tissue>Caudate nucleus</tissue>
    </source>
</reference>
<reference key="2">
    <citation type="journal article" date="2006" name="Nature">
        <title>DNA sequence of human chromosome 17 and analysis of rearrangement in the human lineage.</title>
        <authorList>
            <person name="Zody M.C."/>
            <person name="Garber M."/>
            <person name="Adams D.J."/>
            <person name="Sharpe T."/>
            <person name="Harrow J."/>
            <person name="Lupski J.R."/>
            <person name="Nicholson C."/>
            <person name="Searle S.M."/>
            <person name="Wilming L."/>
            <person name="Young S.K."/>
            <person name="Abouelleil A."/>
            <person name="Allen N.R."/>
            <person name="Bi W."/>
            <person name="Bloom T."/>
            <person name="Borowsky M.L."/>
            <person name="Bugalter B.E."/>
            <person name="Butler J."/>
            <person name="Chang J.L."/>
            <person name="Chen C.-K."/>
            <person name="Cook A."/>
            <person name="Corum B."/>
            <person name="Cuomo C.A."/>
            <person name="de Jong P.J."/>
            <person name="DeCaprio D."/>
            <person name="Dewar K."/>
            <person name="FitzGerald M."/>
            <person name="Gilbert J."/>
            <person name="Gibson R."/>
            <person name="Gnerre S."/>
            <person name="Goldstein S."/>
            <person name="Grafham D.V."/>
            <person name="Grocock R."/>
            <person name="Hafez N."/>
            <person name="Hagopian D.S."/>
            <person name="Hart E."/>
            <person name="Norman C.H."/>
            <person name="Humphray S."/>
            <person name="Jaffe D.B."/>
            <person name="Jones M."/>
            <person name="Kamal M."/>
            <person name="Khodiyar V.K."/>
            <person name="LaButti K."/>
            <person name="Laird G."/>
            <person name="Lehoczky J."/>
            <person name="Liu X."/>
            <person name="Lokyitsang T."/>
            <person name="Loveland J."/>
            <person name="Lui A."/>
            <person name="Macdonald P."/>
            <person name="Major J.E."/>
            <person name="Matthews L."/>
            <person name="Mauceli E."/>
            <person name="McCarroll S.A."/>
            <person name="Mihalev A.H."/>
            <person name="Mudge J."/>
            <person name="Nguyen C."/>
            <person name="Nicol R."/>
            <person name="O'Leary S.B."/>
            <person name="Osoegawa K."/>
            <person name="Schwartz D.C."/>
            <person name="Shaw-Smith C."/>
            <person name="Stankiewicz P."/>
            <person name="Steward C."/>
            <person name="Swarbreck D."/>
            <person name="Venkataraman V."/>
            <person name="Whittaker C.A."/>
            <person name="Yang X."/>
            <person name="Zimmer A.R."/>
            <person name="Bradley A."/>
            <person name="Hubbard T."/>
            <person name="Birren B.W."/>
            <person name="Rogers J."/>
            <person name="Lander E.S."/>
            <person name="Nusbaum C."/>
        </authorList>
    </citation>
    <scope>NUCLEOTIDE SEQUENCE [LARGE SCALE GENOMIC DNA]</scope>
</reference>
<reference key="3">
    <citation type="submission" date="2005-09" db="EMBL/GenBank/DDBJ databases">
        <authorList>
            <person name="Mural R.J."/>
            <person name="Istrail S."/>
            <person name="Sutton G."/>
            <person name="Florea L."/>
            <person name="Halpern A.L."/>
            <person name="Mobarry C.M."/>
            <person name="Lippert R."/>
            <person name="Walenz B."/>
            <person name="Shatkay H."/>
            <person name="Dew I."/>
            <person name="Miller J.R."/>
            <person name="Flanigan M.J."/>
            <person name="Edwards N.J."/>
            <person name="Bolanos R."/>
            <person name="Fasulo D."/>
            <person name="Halldorsson B.V."/>
            <person name="Hannenhalli S."/>
            <person name="Turner R."/>
            <person name="Yooseph S."/>
            <person name="Lu F."/>
            <person name="Nusskern D.R."/>
            <person name="Shue B.C."/>
            <person name="Zheng X.H."/>
            <person name="Zhong F."/>
            <person name="Delcher A.L."/>
            <person name="Huson D.H."/>
            <person name="Kravitz S.A."/>
            <person name="Mouchard L."/>
            <person name="Reinert K."/>
            <person name="Remington K.A."/>
            <person name="Clark A.G."/>
            <person name="Waterman M.S."/>
            <person name="Eichler E.E."/>
            <person name="Adams M.D."/>
            <person name="Hunkapiller M.W."/>
            <person name="Myers E.W."/>
            <person name="Venter J.C."/>
        </authorList>
    </citation>
    <scope>NUCLEOTIDE SEQUENCE [LARGE SCALE GENOMIC DNA]</scope>
</reference>
<reference key="4">
    <citation type="journal article" date="2004" name="Genome Res.">
        <title>The status, quality, and expansion of the NIH full-length cDNA project: the Mammalian Gene Collection (MGC).</title>
        <authorList>
            <consortium name="The MGC Project Team"/>
        </authorList>
    </citation>
    <scope>NUCLEOTIDE SEQUENCE [LARGE SCALE MRNA] (ISOFORM 1)</scope>
    <scope>VARIANT ILE-125</scope>
    <source>
        <tissue>Pancreas</tissue>
        <tissue>Skin</tissue>
    </source>
</reference>
<reference key="5">
    <citation type="journal article" date="2001" name="Genomics">
        <title>The human mitochondrial ribosomal protein genes: mapping of 54 genes to the chromosomes and implications for human disorders.</title>
        <authorList>
            <person name="Kenmochi N."/>
            <person name="Suzuki T."/>
            <person name="Uechi T."/>
            <person name="Magoori M."/>
            <person name="Kuniba M."/>
            <person name="Higa S."/>
            <person name="Watanabe K."/>
            <person name="Tanaka T."/>
        </authorList>
    </citation>
    <scope>NUCLEOTIDE SEQUENCE [GENOMIC DNA] OF 235-261</scope>
</reference>
<reference key="6">
    <citation type="journal article" date="2001" name="J. Biol. Chem.">
        <title>The large subunit of the mammalian mitochondrial ribosome. Analysis of the complement of ribosomal proteins present.</title>
        <authorList>
            <person name="Koc E.C."/>
            <person name="Burkhart W."/>
            <person name="Blackburn K."/>
            <person name="Moyer M.B."/>
            <person name="Schlatzer D.M."/>
            <person name="Moseley A."/>
            <person name="Spremulli L.L."/>
        </authorList>
    </citation>
    <scope>IDENTIFICATION</scope>
</reference>
<reference key="7">
    <citation type="journal article" date="2011" name="BMC Syst. Biol.">
        <title>Initial characterization of the human central proteome.</title>
        <authorList>
            <person name="Burkard T.R."/>
            <person name="Planyavsky M."/>
            <person name="Kaupe I."/>
            <person name="Breitwieser F.P."/>
            <person name="Buerckstuemmer T."/>
            <person name="Bennett K.L."/>
            <person name="Superti-Furga G."/>
            <person name="Colinge J."/>
        </authorList>
    </citation>
    <scope>IDENTIFICATION BY MASS SPECTROMETRY [LARGE SCALE ANALYSIS]</scope>
</reference>
<reference key="8">
    <citation type="journal article" date="2015" name="Proteomics">
        <title>N-terminome analysis of the human mitochondrial proteome.</title>
        <authorList>
            <person name="Vaca Jacome A.S."/>
            <person name="Rabilloud T."/>
            <person name="Schaeffer-Reiss C."/>
            <person name="Rompais M."/>
            <person name="Ayoub D."/>
            <person name="Lane L."/>
            <person name="Bairoch A."/>
            <person name="Van Dorsselaer A."/>
            <person name="Carapito C."/>
        </authorList>
    </citation>
    <scope>IDENTIFICATION BY MASS SPECTROMETRY [LARGE SCALE ANALYSIS]</scope>
</reference>
<reference evidence="13" key="9">
    <citation type="journal article" date="2014" name="Science">
        <title>Structure of the large ribosomal subunit from human mitochondria.</title>
        <authorList>
            <person name="Brown A."/>
            <person name="Amunts A."/>
            <person name="Bai X.C."/>
            <person name="Sugimoto Y."/>
            <person name="Edwards P.C."/>
            <person name="Murshudov G."/>
            <person name="Scheres S.H."/>
            <person name="Ramakrishnan V."/>
        </authorList>
    </citation>
    <scope>STRUCTURE BY ELECTRON MICROSCOPY (3.40 ANGSTROMS)</scope>
    <scope>SUBCELLULAR LOCATION</scope>
    <scope>SUBUNIT</scope>
</reference>
<reference evidence="14" key="10">
    <citation type="journal article" date="2015" name="Science">
        <title>Ribosome. The structure of the human mitochondrial ribosome.</title>
        <authorList>
            <person name="Amunts A."/>
            <person name="Brown A."/>
            <person name="Toots J."/>
            <person name="Scheres S.H."/>
            <person name="Ramakrishnan V."/>
        </authorList>
    </citation>
    <scope>STRUCTURE BY ELECTRON MICROSCOPY (3.50 ANGSTROMS)</scope>
    <scope>SUBCELLULAR LOCATION</scope>
    <scope>SUBUNIT</scope>
</reference>
<reference evidence="15 16" key="11">
    <citation type="journal article" date="2017" name="Nat. Struct. Mol. Biol.">
        <title>Structures of the human mitochondrial ribosome in native states of assembly.</title>
        <authorList>
            <person name="Brown A."/>
            <person name="Rathore S."/>
            <person name="Kimanius D."/>
            <person name="Aibara S."/>
            <person name="Bai X.C."/>
            <person name="Rorbach J."/>
            <person name="Amunts A."/>
            <person name="Ramakrishnan V."/>
        </authorList>
    </citation>
    <scope>STRUCTURE BY ELECTRON MICROSCOPY (3.03 ANGSTROMS)</scope>
    <scope>SUBCELLULAR LOCATION</scope>
    <scope>SUBUNIT</scope>
</reference>
<reference evidence="17" key="12">
    <citation type="journal article" date="2022" name="Nat. Commun.">
        <title>A late-stage assembly checkpoint of the human mitochondrial ribosome large subunit.</title>
        <authorList>
            <person name="Rebelo-Guiomar P."/>
            <person name="Pellegrino S."/>
            <person name="Dent K.C."/>
            <person name="Sas-Chen A."/>
            <person name="Miller-Fleming L."/>
            <person name="Garone C."/>
            <person name="Van Haute L."/>
            <person name="Rogan J.F."/>
            <person name="Dinan A."/>
            <person name="Firth A.E."/>
            <person name="Andrews B."/>
            <person name="Whitworth A.J."/>
            <person name="Schwartz S."/>
            <person name="Warren A.J."/>
            <person name="Minczuk M."/>
        </authorList>
    </citation>
    <scope>STRUCTURE BY ELECTRON MICROSCOPY (2.9 ANGSTROMS) IN COMPLEX WITH MTLSU</scope>
    <scope>SUBUNIT</scope>
</reference>
<reference key="13">
    <citation type="journal article" date="2015" name="Arch. Iran. Med.">
        <title>Exome Sequencing and Linkage Analysis Identified Novel Candidate Genes in Recessive Intellectual Disability Associated with Ataxia.</title>
        <authorList>
            <person name="Jazayeri R."/>
            <person name="Hu H."/>
            <person name="Fattahi Z."/>
            <person name="Musante L."/>
            <person name="Abedini S.S."/>
            <person name="Hosseini M."/>
            <person name="Wienker T.F."/>
            <person name="Ropers H.H."/>
            <person name="Najmabadi H."/>
            <person name="Kahrizi K."/>
        </authorList>
    </citation>
    <scope>VARIANT TRP-166</scope>
</reference>
<name>RM10_HUMAN</name>
<sequence>MAAAVAGMLRGGLLPQAGRLPTLQTVRYGSKAVTRHRRVMHFQRQKLMAVTEYIPPKPAIHPSCLPSPPSPPQEEIGLIRLLRREIAAVFQDNRMIAVCQNVALSAEDKLLMRHQLRKHKILMKVFPNQVLKPFLEDSKYQNLLPLFVGHNMLLVSEEPKVKEMVRILRTVPFLPLLGGCIDDTILSRQGFINYSKLPSLPLVQGELVGGLTCLTAQTHSLLQHQPLQLTTLLDQYIREQREKDSVMSANGKPDPDTVPDS</sequence>
<comment type="subunit">
    <text evidence="4 5 7 8 12">Component of the mitochondrial large ribosomal subunit (mt-LSU) (PubMed:25278503, PubMed:25838379, PubMed:28892042, PubMed:35177605). Mature mammalian 55S mitochondrial ribosomes consist of a small (28S) and a large (39S) subunit. The 28S small subunit contains a 12S ribosomal RNA (12S mt-rRNA) and 30 different proteins. The 39S large subunit contains a 16S rRNA (16S mt-rRNA), a copy of mitochondrial valine transfer RNA (mt-tRNA(Val)), which plays an integral structural role, and 52 different proteins. uL10m contributes a single cysteine residue to a zinc-binding site with mL66.</text>
</comment>
<comment type="interaction">
    <interactant intactId="EBI-723524">
        <id>Q7Z7H8</id>
    </interactant>
    <interactant intactId="EBI-77797">
        <id>P35609</id>
        <label>ACTN2</label>
    </interactant>
    <organismsDiffer>false</organismsDiffer>
    <experiments>3</experiments>
</comment>
<comment type="interaction">
    <interactant intactId="EBI-723524">
        <id>Q7Z7H8</id>
    </interactant>
    <interactant intactId="EBI-10175124">
        <id>Q8IZU0</id>
        <label>FAM9B</label>
    </interactant>
    <organismsDiffer>false</organismsDiffer>
    <experiments>3</experiments>
</comment>
<comment type="interaction">
    <interactant intactId="EBI-723524">
        <id>Q7Z7H8</id>
    </interactant>
    <interactant intactId="EBI-740929">
        <id>Q53G59</id>
        <label>KLHL12</label>
    </interactant>
    <organismsDiffer>false</organismsDiffer>
    <experiments>3</experiments>
</comment>
<comment type="interaction">
    <interactant intactId="EBI-723524">
        <id>Q7Z7H8</id>
    </interactant>
    <interactant intactId="EBI-302345">
        <id>Q8ND90</id>
        <label>PNMA1</label>
    </interactant>
    <organismsDiffer>false</organismsDiffer>
    <experiments>3</experiments>
</comment>
<comment type="interaction">
    <interactant intactId="EBI-723524">
        <id>Q7Z7H8</id>
    </interactant>
    <interactant intactId="EBI-307352">
        <id>Q04864</id>
        <label>REL</label>
    </interactant>
    <organismsDiffer>false</organismsDiffer>
    <experiments>3</experiments>
</comment>
<comment type="interaction">
    <interactant intactId="EBI-723524">
        <id>Q7Z7H8</id>
    </interactant>
    <interactant intactId="EBI-533224">
        <id>P15884</id>
        <label>TCF4</label>
    </interactant>
    <organismsDiffer>false</organismsDiffer>
    <experiments>3</experiments>
</comment>
<comment type="subcellular location">
    <subcellularLocation>
        <location evidence="4 5 7">Mitochondrion</location>
    </subcellularLocation>
</comment>
<comment type="alternative products">
    <event type="alternative splicing"/>
    <isoform>
        <id>Q7Z7H8-1</id>
        <name>1</name>
        <sequence type="displayed"/>
    </isoform>
    <isoform>
        <id>Q7Z7H8-2</id>
        <name>2</name>
        <sequence type="described" ref="VSP_044481"/>
    </isoform>
</comment>
<comment type="similarity">
    <text evidence="11">Belongs to the universal ribosomal protein uL10 family.</text>
</comment>
<gene>
    <name type="primary">MRPL10</name>
    <name type="synonym">MRPL8</name>
    <name type="synonym">RPML8</name>
</gene>
<proteinExistence type="evidence at protein level"/>
<protein>
    <recommendedName>
        <fullName evidence="10">Large ribosomal subunit protein uL10m</fullName>
    </recommendedName>
    <alternativeName>
        <fullName>39S ribosomal protein L10, mitochondrial</fullName>
        <shortName>L10mt</shortName>
        <shortName>MRP-L10</shortName>
    </alternativeName>
    <alternativeName>
        <fullName>39S ribosomal protein L8, mitochondrial</fullName>
        <shortName>L8mt</shortName>
        <shortName>MRP-L8</shortName>
    </alternativeName>
</protein>
<evidence type="ECO:0000250" key="1"/>
<evidence type="ECO:0000256" key="2">
    <source>
        <dbReference type="SAM" id="MobiDB-lite"/>
    </source>
</evidence>
<evidence type="ECO:0000269" key="3">
    <source>
    </source>
</evidence>
<evidence type="ECO:0000269" key="4">
    <source>
    </source>
</evidence>
<evidence type="ECO:0000269" key="5">
    <source>
    </source>
</evidence>
<evidence type="ECO:0000269" key="6">
    <source>
    </source>
</evidence>
<evidence type="ECO:0000269" key="7">
    <source>
    </source>
</evidence>
<evidence type="ECO:0000269" key="8">
    <source>
    </source>
</evidence>
<evidence type="ECO:0000303" key="9">
    <source>
    </source>
</evidence>
<evidence type="ECO:0000303" key="10">
    <source>
    </source>
</evidence>
<evidence type="ECO:0000305" key="11"/>
<evidence type="ECO:0000305" key="12">
    <source>
    </source>
</evidence>
<evidence type="ECO:0007744" key="13">
    <source>
        <dbReference type="PDB" id="3J7Y"/>
    </source>
</evidence>
<evidence type="ECO:0007744" key="14">
    <source>
        <dbReference type="PDB" id="3J9M"/>
    </source>
</evidence>
<evidence type="ECO:0007744" key="15">
    <source>
        <dbReference type="PDB" id="5OOL"/>
    </source>
</evidence>
<evidence type="ECO:0007744" key="16">
    <source>
        <dbReference type="PDB" id="5OOM"/>
    </source>
</evidence>
<evidence type="ECO:0007744" key="17">
    <source>
        <dbReference type="PDB" id="7QH7"/>
    </source>
</evidence>
<evidence type="ECO:0007829" key="18">
    <source>
        <dbReference type="PDB" id="3J7Y"/>
    </source>
</evidence>
<evidence type="ECO:0007829" key="19">
    <source>
        <dbReference type="PDB" id="7OF0"/>
    </source>
</evidence>
<evidence type="ECO:0007829" key="20">
    <source>
        <dbReference type="PDB" id="7OIA"/>
    </source>
</evidence>
<evidence type="ECO:0007829" key="21">
    <source>
        <dbReference type="PDB" id="8QU1"/>
    </source>
</evidence>
<evidence type="ECO:0007829" key="22">
    <source>
        <dbReference type="PDB" id="8QU5"/>
    </source>
</evidence>
<organism>
    <name type="scientific">Homo sapiens</name>
    <name type="common">Human</name>
    <dbReference type="NCBI Taxonomy" id="9606"/>
    <lineage>
        <taxon>Eukaryota</taxon>
        <taxon>Metazoa</taxon>
        <taxon>Chordata</taxon>
        <taxon>Craniata</taxon>
        <taxon>Vertebrata</taxon>
        <taxon>Euteleostomi</taxon>
        <taxon>Mammalia</taxon>
        <taxon>Eutheria</taxon>
        <taxon>Euarchontoglires</taxon>
        <taxon>Primates</taxon>
        <taxon>Haplorrhini</taxon>
        <taxon>Catarrhini</taxon>
        <taxon>Hominidae</taxon>
        <taxon>Homo</taxon>
    </lineage>
</organism>
<keyword id="KW-0002">3D-structure</keyword>
<keyword id="KW-0025">Alternative splicing</keyword>
<keyword id="KW-0496">Mitochondrion</keyword>
<keyword id="KW-1267">Proteomics identification</keyword>
<keyword id="KW-1185">Reference proteome</keyword>
<keyword id="KW-0687">Ribonucleoprotein</keyword>
<keyword id="KW-0689">Ribosomal protein</keyword>
<keyword id="KW-0809">Transit peptide</keyword>
<accession>Q7Z7H8</accession>
<accession>A6NGJ4</accession>
<accession>Q96B80</accession>
<accession>Q96Q55</accession>